<keyword id="KW-1005">Bacterial flagellum biogenesis</keyword>
<keyword id="KW-1006">Bacterial flagellum protein export</keyword>
<keyword id="KW-1003">Cell membrane</keyword>
<keyword id="KW-0472">Membrane</keyword>
<keyword id="KW-0653">Protein transport</keyword>
<keyword id="KW-1185">Reference proteome</keyword>
<keyword id="KW-0812">Transmembrane</keyword>
<keyword id="KW-1133">Transmembrane helix</keyword>
<keyword id="KW-0813">Transport</keyword>
<comment type="function">
    <text evidence="1">Required for formation of the rod structure in the basal body of the flagellar apparatus. Together with FliI and FliH, may constitute the export apparatus of flagellin (By similarity).</text>
</comment>
<comment type="subcellular location">
    <subcellularLocation>
        <location evidence="3">Cell membrane</location>
        <topology evidence="3">Multi-pass membrane protein</topology>
    </subcellularLocation>
</comment>
<comment type="similarity">
    <text evidence="3">Belongs to the type III secretion exporter family.</text>
</comment>
<dbReference type="EMBL" id="AE016826">
    <property type="protein sequence ID" value="AAO26953.1"/>
    <property type="molecule type" value="Genomic_DNA"/>
</dbReference>
<dbReference type="RefSeq" id="WP_011091354.1">
    <property type="nucleotide sequence ID" value="NC_004545.1"/>
</dbReference>
<dbReference type="SMR" id="Q89AN6"/>
<dbReference type="STRING" id="224915.bbp_222"/>
<dbReference type="MEROPS" id="N06.A01"/>
<dbReference type="KEGG" id="bab:bbp_222"/>
<dbReference type="eggNOG" id="COG1377">
    <property type="taxonomic scope" value="Bacteria"/>
</dbReference>
<dbReference type="HOGENOM" id="CLU_041013_1_0_6"/>
<dbReference type="OrthoDB" id="9807950at2"/>
<dbReference type="Proteomes" id="UP000000601">
    <property type="component" value="Chromosome"/>
</dbReference>
<dbReference type="GO" id="GO:0005886">
    <property type="term" value="C:plasma membrane"/>
    <property type="evidence" value="ECO:0007669"/>
    <property type="project" value="UniProtKB-SubCell"/>
</dbReference>
<dbReference type="GO" id="GO:0044781">
    <property type="term" value="P:bacterial-type flagellum organization"/>
    <property type="evidence" value="ECO:0007669"/>
    <property type="project" value="UniProtKB-KW"/>
</dbReference>
<dbReference type="GO" id="GO:0009306">
    <property type="term" value="P:protein secretion"/>
    <property type="evidence" value="ECO:0007669"/>
    <property type="project" value="InterPro"/>
</dbReference>
<dbReference type="Gene3D" id="6.10.250.2080">
    <property type="match status" value="1"/>
</dbReference>
<dbReference type="Gene3D" id="3.40.1690.10">
    <property type="entry name" value="secretion proteins EscU"/>
    <property type="match status" value="1"/>
</dbReference>
<dbReference type="InterPro" id="IPR006135">
    <property type="entry name" value="T3SS_substrate_exporter"/>
</dbReference>
<dbReference type="InterPro" id="IPR029025">
    <property type="entry name" value="T3SS_substrate_exporter_C"/>
</dbReference>
<dbReference type="PANTHER" id="PTHR30531">
    <property type="entry name" value="FLAGELLAR BIOSYNTHETIC PROTEIN FLHB"/>
    <property type="match status" value="1"/>
</dbReference>
<dbReference type="PANTHER" id="PTHR30531:SF12">
    <property type="entry name" value="FLAGELLAR BIOSYNTHETIC PROTEIN FLHB"/>
    <property type="match status" value="1"/>
</dbReference>
<dbReference type="Pfam" id="PF01312">
    <property type="entry name" value="Bac_export_2"/>
    <property type="match status" value="1"/>
</dbReference>
<dbReference type="PRINTS" id="PR00950">
    <property type="entry name" value="TYPE3IMSPROT"/>
</dbReference>
<dbReference type="SUPFAM" id="SSF160544">
    <property type="entry name" value="EscU C-terminal domain-like"/>
    <property type="match status" value="1"/>
</dbReference>
<protein>
    <recommendedName>
        <fullName>Flagellar biosynthetic protein FlhB</fullName>
    </recommendedName>
</protein>
<feature type="chain" id="PRO_0000180948" description="Flagellar biosynthetic protein FlhB">
    <location>
        <begin position="1"/>
        <end position="382"/>
    </location>
</feature>
<feature type="transmembrane region" description="Helical" evidence="2">
    <location>
        <begin position="33"/>
        <end position="55"/>
    </location>
</feature>
<feature type="transmembrane region" description="Helical" evidence="2">
    <location>
        <begin position="90"/>
        <end position="112"/>
    </location>
</feature>
<feature type="transmembrane region" description="Helical" evidence="2">
    <location>
        <begin position="150"/>
        <end position="169"/>
    </location>
</feature>
<feature type="transmembrane region" description="Helical" evidence="2">
    <location>
        <begin position="189"/>
        <end position="211"/>
    </location>
</feature>
<sequence length="382" mass="45395">MNHDESEEKTESPTSYRLKISKETGHNRYYRELYSLLILTITLINFWYNQRLILTLLKRIFYLSFTFNNSIFQNDLFLDHNFLMIFQDNLISLLGIIFFPMLIFMFPAMILCCSNFNFKFIKFDINKLNPILGFKNVFSIKSIVDLFKTVLKIVFVSIVVYLFISKYFLKVCFSSNFTFDYILNYSVRTIFLCFLTILIFFIPIIIIDLFWEKYNFYRSLRMTRKEVSDELKNMEGNPRIKSRIRQIMFSISNRRMLSNVSKSDVIVVNPMHYAIAIKYNETNMYAPKILAKGIDELAIKIKKIGNNHSIPTLVSHSLAHVLYYRTEVGEYIPSVLYEAVAEVLAWVWKIRHWKIKGGVFPRTPEKFFIPSELYEKRIKKRG</sequence>
<gene>
    <name type="primary">flhB</name>
    <name type="ordered locus">bbp_222</name>
</gene>
<evidence type="ECO:0000250" key="1"/>
<evidence type="ECO:0000255" key="2"/>
<evidence type="ECO:0000305" key="3"/>
<name>FLHB_BUCBP</name>
<organism>
    <name type="scientific">Buchnera aphidicola subsp. Baizongia pistaciae (strain Bp)</name>
    <dbReference type="NCBI Taxonomy" id="224915"/>
    <lineage>
        <taxon>Bacteria</taxon>
        <taxon>Pseudomonadati</taxon>
        <taxon>Pseudomonadota</taxon>
        <taxon>Gammaproteobacteria</taxon>
        <taxon>Enterobacterales</taxon>
        <taxon>Erwiniaceae</taxon>
        <taxon>Buchnera</taxon>
    </lineage>
</organism>
<reference key="1">
    <citation type="journal article" date="2003" name="Proc. Natl. Acad. Sci. U.S.A.">
        <title>Reductive genome evolution in Buchnera aphidicola.</title>
        <authorList>
            <person name="van Ham R.C.H.J."/>
            <person name="Kamerbeek J."/>
            <person name="Palacios C."/>
            <person name="Rausell C."/>
            <person name="Abascal F."/>
            <person name="Bastolla U."/>
            <person name="Fernandez J.M."/>
            <person name="Jimenez L."/>
            <person name="Postigo M."/>
            <person name="Silva F.J."/>
            <person name="Tamames J."/>
            <person name="Viguera E."/>
            <person name="Latorre A."/>
            <person name="Valencia A."/>
            <person name="Moran F."/>
            <person name="Moya A."/>
        </authorList>
    </citation>
    <scope>NUCLEOTIDE SEQUENCE [LARGE SCALE GENOMIC DNA]</scope>
    <source>
        <strain>Bp</strain>
    </source>
</reference>
<accession>Q89AN6</accession>
<proteinExistence type="inferred from homology"/>